<gene>
    <name evidence="5" type="primary">pgi/pmi</name>
    <name type="ordered locus">PAE1610</name>
</gene>
<feature type="chain" id="PRO_0000227794" description="Bifunctional phosphoglucose/phosphomannose isomerase">
    <location>
        <begin position="1"/>
        <end position="302"/>
    </location>
</feature>
<feature type="domain" description="SIS" evidence="1">
    <location>
        <begin position="27"/>
        <end position="160"/>
    </location>
</feature>
<feature type="active site" description="Proton acceptor" evidence="8 10">
    <location>
        <position position="203"/>
    </location>
</feature>
<feature type="active site" description="Proton donor" evidence="8 10">
    <location>
        <position position="219"/>
    </location>
</feature>
<feature type="active site" description="Proton acceptor" evidence="8 10">
    <location>
        <position position="298"/>
    </location>
</feature>
<feature type="binding site" evidence="4 13">
    <location>
        <position position="47"/>
    </location>
    <ligand>
        <name>D-fructose 6-phosphate</name>
        <dbReference type="ChEBI" id="CHEBI:61527"/>
    </ligand>
</feature>
<feature type="binding site" evidence="4 14">
    <location>
        <position position="47"/>
    </location>
    <ligand>
        <name>D-glucose 6-phosphate</name>
        <dbReference type="ChEBI" id="CHEBI:61548"/>
    </ligand>
</feature>
<feature type="binding site" evidence="4 13">
    <location>
        <position position="48"/>
    </location>
    <ligand>
        <name>D-fructose 6-phosphate</name>
        <dbReference type="ChEBI" id="CHEBI:61527"/>
    </ligand>
</feature>
<feature type="binding site" evidence="4 14">
    <location>
        <position position="48"/>
    </location>
    <ligand>
        <name>D-glucose 6-phosphate</name>
        <dbReference type="ChEBI" id="CHEBI:61548"/>
    </ligand>
</feature>
<feature type="binding site" evidence="4 13">
    <location>
        <position position="87"/>
    </location>
    <ligand>
        <name>D-fructose 6-phosphate</name>
        <dbReference type="ChEBI" id="CHEBI:61527"/>
    </ligand>
</feature>
<feature type="binding site" evidence="4 14">
    <location>
        <position position="87"/>
    </location>
    <ligand>
        <name>D-glucose 6-phosphate</name>
        <dbReference type="ChEBI" id="CHEBI:61548"/>
    </ligand>
</feature>
<feature type="binding site" evidence="4 13">
    <location>
        <position position="89"/>
    </location>
    <ligand>
        <name>D-fructose 6-phosphate</name>
        <dbReference type="ChEBI" id="CHEBI:61527"/>
    </ligand>
</feature>
<feature type="binding site" evidence="4 14">
    <location>
        <position position="89"/>
    </location>
    <ligand>
        <name>D-glucose 6-phosphate</name>
        <dbReference type="ChEBI" id="CHEBI:61548"/>
    </ligand>
</feature>
<feature type="binding site" evidence="4 13">
    <location>
        <position position="92"/>
    </location>
    <ligand>
        <name>D-fructose 6-phosphate</name>
        <dbReference type="ChEBI" id="CHEBI:61527"/>
    </ligand>
</feature>
<feature type="binding site" evidence="4 14">
    <location>
        <position position="92"/>
    </location>
    <ligand>
        <name>D-glucose 6-phosphate</name>
        <dbReference type="ChEBI" id="CHEBI:61548"/>
    </ligand>
</feature>
<feature type="binding site" evidence="4 13">
    <location>
        <position position="135"/>
    </location>
    <ligand>
        <name>D-fructose 6-phosphate</name>
        <dbReference type="ChEBI" id="CHEBI:61527"/>
    </ligand>
</feature>
<feature type="binding site" evidence="4 14">
    <location>
        <position position="135"/>
    </location>
    <ligand>
        <name>D-glucose 6-phosphate</name>
        <dbReference type="ChEBI" id="CHEBI:61548"/>
    </ligand>
</feature>
<feature type="binding site" evidence="4 13">
    <location>
        <position position="219"/>
    </location>
    <ligand>
        <name>D-fructose 6-phosphate</name>
        <dbReference type="ChEBI" id="CHEBI:61527"/>
    </ligand>
</feature>
<feature type="binding site" evidence="4 14">
    <location>
        <position position="219"/>
    </location>
    <ligand>
        <name>D-glucose 6-phosphate</name>
        <dbReference type="ChEBI" id="CHEBI:61548"/>
    </ligand>
</feature>
<feature type="binding site" evidence="4 13">
    <location>
        <position position="298"/>
    </location>
    <ligand>
        <name>D-fructose 6-phosphate</name>
        <dbReference type="ChEBI" id="CHEBI:61527"/>
    </ligand>
</feature>
<feature type="binding site" evidence="4 14">
    <location>
        <position position="298"/>
    </location>
    <ligand>
        <name>D-glucose 6-phosphate</name>
        <dbReference type="ChEBI" id="CHEBI:61548"/>
    </ligand>
</feature>
<feature type="helix" evidence="15">
    <location>
        <begin position="3"/>
        <end position="9"/>
    </location>
</feature>
<feature type="helix" evidence="15">
    <location>
        <begin position="10"/>
        <end position="14"/>
    </location>
</feature>
<feature type="strand" evidence="15">
    <location>
        <begin position="23"/>
        <end position="27"/>
    </location>
</feature>
<feature type="strand" evidence="15">
    <location>
        <begin position="30"/>
        <end position="33"/>
    </location>
</feature>
<feature type="strand" evidence="15">
    <location>
        <begin position="38"/>
        <end position="43"/>
    </location>
</feature>
<feature type="helix" evidence="15">
    <location>
        <begin position="46"/>
        <end position="61"/>
    </location>
</feature>
<feature type="strand" evidence="15">
    <location>
        <begin position="65"/>
        <end position="71"/>
    </location>
</feature>
<feature type="strand" evidence="15">
    <location>
        <begin position="79"/>
        <end position="86"/>
    </location>
</feature>
<feature type="strand" evidence="15">
    <location>
        <begin position="88"/>
        <end position="90"/>
    </location>
</feature>
<feature type="helix" evidence="15">
    <location>
        <begin position="93"/>
        <end position="104"/>
    </location>
</feature>
<feature type="strand" evidence="15">
    <location>
        <begin position="109"/>
        <end position="115"/>
    </location>
</feature>
<feature type="helix" evidence="15">
    <location>
        <begin position="118"/>
        <end position="120"/>
    </location>
</feature>
<feature type="strand" evidence="15">
    <location>
        <begin position="121"/>
        <end position="123"/>
    </location>
</feature>
<feature type="strand" evidence="15">
    <location>
        <begin position="125"/>
        <end position="127"/>
    </location>
</feature>
<feature type="helix" evidence="15">
    <location>
        <begin position="134"/>
        <end position="137"/>
    </location>
</feature>
<feature type="helix" evidence="15">
    <location>
        <begin position="138"/>
        <end position="153"/>
    </location>
</feature>
<feature type="helix" evidence="15">
    <location>
        <begin position="168"/>
        <end position="178"/>
    </location>
</feature>
<feature type="strand" evidence="15">
    <location>
        <begin position="183"/>
        <end position="187"/>
    </location>
</feature>
<feature type="helix" evidence="15">
    <location>
        <begin position="188"/>
        <end position="190"/>
    </location>
</feature>
<feature type="helix" evidence="15">
    <location>
        <begin position="191"/>
        <end position="203"/>
    </location>
</feature>
<feature type="strand" evidence="15">
    <location>
        <begin position="210"/>
        <end position="214"/>
    </location>
</feature>
<feature type="helix" evidence="15">
    <location>
        <begin position="216"/>
        <end position="219"/>
    </location>
</feature>
<feature type="helix" evidence="15">
    <location>
        <begin position="221"/>
        <end position="224"/>
    </location>
</feature>
<feature type="strand" evidence="15">
    <location>
        <begin position="229"/>
        <end position="233"/>
    </location>
</feature>
<feature type="strand" evidence="15">
    <location>
        <begin position="235"/>
        <end position="237"/>
    </location>
</feature>
<feature type="helix" evidence="15">
    <location>
        <begin position="239"/>
        <end position="252"/>
    </location>
</feature>
<feature type="strand" evidence="15">
    <location>
        <begin position="255"/>
        <end position="258"/>
    </location>
</feature>
<feature type="helix" evidence="15">
    <location>
        <begin position="263"/>
        <end position="284"/>
    </location>
</feature>
<feature type="helix" evidence="15">
    <location>
        <begin position="292"/>
        <end position="300"/>
    </location>
</feature>
<sequence>MSQLLQDYLNWENYILRRVDFPTSYVVEGEVVRIEAMPRLYISGMGGSGVVADLIRDFSLTWNWEVEVIAVKDYFLKARDGLLIAVSYSGNTIETLYTVEYAKRRRIPAVAITTGGRLAQMGVPTVIVPKASAPRAALPQLLTAALHVVAKVYGIDVKIPEGLEPPNEALIHKLVEEFQKRPTIIAAESMRGVAYRVKNEFNENAKIEPSVEILPEAHHNWIEGSERAVVALTSPHIPKEHQERVKATVEIVGGSIYAVEMHPKGVLSFLRDVGIASVKLAEIRGVNPLATPRIDALKRRLQ</sequence>
<keyword id="KW-0002">3D-structure</keyword>
<keyword id="KW-0119">Carbohydrate metabolism</keyword>
<keyword id="KW-0963">Cytoplasm</keyword>
<keyword id="KW-0413">Isomerase</keyword>
<keyword id="KW-1185">Reference proteome</keyword>
<evidence type="ECO:0000255" key="1">
    <source>
        <dbReference type="PROSITE-ProRule" id="PRU00797"/>
    </source>
</evidence>
<evidence type="ECO:0000269" key="2">
    <source>
    </source>
</evidence>
<evidence type="ECO:0000269" key="3">
    <source>
    </source>
</evidence>
<evidence type="ECO:0000269" key="4">
    <source>
    </source>
</evidence>
<evidence type="ECO:0000303" key="5">
    <source>
    </source>
</evidence>
<evidence type="ECO:0000303" key="6">
    <source>
    </source>
</evidence>
<evidence type="ECO:0000305" key="7"/>
<evidence type="ECO:0000305" key="8">
    <source>
    </source>
</evidence>
<evidence type="ECO:0000305" key="9">
    <source>
    </source>
</evidence>
<evidence type="ECO:0000305" key="10">
    <source>
    </source>
</evidence>
<evidence type="ECO:0007744" key="11">
    <source>
        <dbReference type="PDB" id="1TZB"/>
    </source>
</evidence>
<evidence type="ECO:0007744" key="12">
    <source>
        <dbReference type="PDB" id="1TZC"/>
    </source>
</evidence>
<evidence type="ECO:0007744" key="13">
    <source>
        <dbReference type="PDB" id="1X9H"/>
    </source>
</evidence>
<evidence type="ECO:0007744" key="14">
    <source>
        <dbReference type="PDB" id="1X9I"/>
    </source>
</evidence>
<evidence type="ECO:0007829" key="15">
    <source>
        <dbReference type="PDB" id="1TZB"/>
    </source>
</evidence>
<reference key="1">
    <citation type="journal article" date="2002" name="Proc. Natl. Acad. Sci. U.S.A.">
        <title>Genome sequence of the hyperthermophilic crenarchaeon Pyrobaculum aerophilum.</title>
        <authorList>
            <person name="Fitz-Gibbon S.T."/>
            <person name="Ladner H."/>
            <person name="Kim U.-J."/>
            <person name="Stetter K.O."/>
            <person name="Simon M.I."/>
            <person name="Miller J.H."/>
        </authorList>
    </citation>
    <scope>NUCLEOTIDE SEQUENCE [LARGE SCALE GENOMIC DNA]</scope>
    <source>
        <strain>ATCC 51768 / DSM 7523 / JCM 9630 / CIP 104966 / NBRC 100827 / IM2</strain>
    </source>
</reference>
<reference key="2">
    <citation type="journal article" date="2004" name="Extremophiles">
        <title>Bifunctional phosphoglucose/phosphomannose isomerase from the hyperthermophilic archaeon Pyrobaculum aerophilum.</title>
        <authorList>
            <person name="Hansen T."/>
            <person name="Urbanke C."/>
            <person name="Schoenheit P."/>
        </authorList>
    </citation>
    <scope>FUNCTION</scope>
    <scope>CATALYTIC ACTIVITY</scope>
    <scope>ACTIVITY REGULATION</scope>
    <scope>BIOPHYSICOCHEMICAL PROPERTIES</scope>
    <scope>SUBUNIT</scope>
</reference>
<reference evidence="11 12" key="3">
    <citation type="journal article" date="2004" name="J. Biol. Chem.">
        <title>A novel phosphoglucose isomerase (PGI)/phosphomannose isomerase from the crenarchaeon Pyrobaculum aerophilum is a member of the PGI superfamily: structural evidence at 1.16-A resolution.</title>
        <authorList>
            <person name="Swan M.K."/>
            <person name="Hansen T."/>
            <person name="Schoenheit P."/>
            <person name="Davies C."/>
        </authorList>
    </citation>
    <scope>X-RAY CRYSTALLOGRAPHY (1.16 ANGSTROMS) OF NATIVE PROTEIN AND IN COMPLEX WITH THE INHIBITOR 5-PHOSPHOARABINONATE</scope>
    <scope>ACTIVITY REGULATION</scope>
    <scope>ISOMERIZATION MECHANISM</scope>
    <scope>ACTIVE SITE</scope>
    <scope>SUBUNIT</scope>
    <scope>DOMAIN</scope>
</reference>
<reference evidence="13 14" key="4">
    <citation type="journal article" date="2004" name="Biochemistry">
        <title>Structural basis for phosphomannose isomerase activity in phosphoglucose isomerase from Pyrobaculum aerophilum: a subtle difference between distantly related enzymes.</title>
        <authorList>
            <person name="Swan M.K."/>
            <person name="Hansen T."/>
            <person name="Schonheit P."/>
            <person name="Davies C."/>
        </authorList>
    </citation>
    <scope>X-RAY CRYSTALLOGRAPHY (1.16 ANGSTROMS) IN COMPLEX WITH FRUCTOSE-6-PHOSPHATE AND GLUCOSE-6-PHOSPHATE</scope>
    <scope>REACTION MECHANISM</scope>
    <scope>ACTIVE SITE</scope>
    <scope>SUBUNIT</scope>
    <scope>DOMAIN</scope>
</reference>
<organism>
    <name type="scientific">Pyrobaculum aerophilum (strain ATCC 51768 / DSM 7523 / JCM 9630 / CIP 104966 / NBRC 100827 / IM2)</name>
    <dbReference type="NCBI Taxonomy" id="178306"/>
    <lineage>
        <taxon>Archaea</taxon>
        <taxon>Thermoproteota</taxon>
        <taxon>Thermoprotei</taxon>
        <taxon>Thermoproteales</taxon>
        <taxon>Thermoproteaceae</taxon>
        <taxon>Pyrobaculum</taxon>
    </lineage>
</organism>
<protein>
    <recommendedName>
        <fullName evidence="5">Bifunctional phosphoglucose/phosphomannose isomerase</fullName>
        <shortName evidence="5">Bifunctional PGI/PMI</shortName>
        <ecNumber evidence="3">5.3.1.8</ecNumber>
        <ecNumber evidence="3">5.3.1.9</ecNumber>
    </recommendedName>
    <alternativeName>
        <fullName>Glucose-6-phosphate isomerase</fullName>
        <shortName>GPI</shortName>
    </alternativeName>
    <alternativeName>
        <fullName>Mannose-6-phosphate isomerase</fullName>
    </alternativeName>
    <alternativeName>
        <fullName evidence="6">PaPGI/PMI</fullName>
    </alternativeName>
</protein>
<name>PGMI_PYRAE</name>
<accession>Q8ZWV0</accession>
<dbReference type="EC" id="5.3.1.8" evidence="3"/>
<dbReference type="EC" id="5.3.1.9" evidence="3"/>
<dbReference type="EMBL" id="AE009441">
    <property type="protein sequence ID" value="AAL63599.1"/>
    <property type="molecule type" value="Genomic_DNA"/>
</dbReference>
<dbReference type="RefSeq" id="WP_011008072.1">
    <property type="nucleotide sequence ID" value="NC_003364.1"/>
</dbReference>
<dbReference type="PDB" id="1TZB">
    <property type="method" value="X-ray"/>
    <property type="resolution" value="1.16 A"/>
    <property type="chains" value="A/B=1-302"/>
</dbReference>
<dbReference type="PDB" id="1TZC">
    <property type="method" value="X-ray"/>
    <property type="resolution" value="1.45 A"/>
    <property type="chains" value="A/B=1-302"/>
</dbReference>
<dbReference type="PDB" id="1X9H">
    <property type="method" value="X-ray"/>
    <property type="resolution" value="1.50 A"/>
    <property type="chains" value="A/B=1-302"/>
</dbReference>
<dbReference type="PDB" id="1X9I">
    <property type="method" value="X-ray"/>
    <property type="resolution" value="1.16 A"/>
    <property type="chains" value="A/B=1-302"/>
</dbReference>
<dbReference type="PDBsum" id="1TZB"/>
<dbReference type="PDBsum" id="1TZC"/>
<dbReference type="PDBsum" id="1X9H"/>
<dbReference type="PDBsum" id="1X9I"/>
<dbReference type="SMR" id="Q8ZWV0"/>
<dbReference type="FunCoup" id="Q8ZWV0">
    <property type="interactions" value="75"/>
</dbReference>
<dbReference type="STRING" id="178306.PAE1610"/>
<dbReference type="EnsemblBacteria" id="AAL63599">
    <property type="protein sequence ID" value="AAL63599"/>
    <property type="gene ID" value="PAE1610"/>
</dbReference>
<dbReference type="GeneID" id="1465847"/>
<dbReference type="KEGG" id="pai:PAE1610"/>
<dbReference type="PATRIC" id="fig|178306.9.peg.1186"/>
<dbReference type="eggNOG" id="arCOG00052">
    <property type="taxonomic scope" value="Archaea"/>
</dbReference>
<dbReference type="HOGENOM" id="CLU_059687_0_1_2"/>
<dbReference type="InParanoid" id="Q8ZWV0"/>
<dbReference type="BRENDA" id="5.3.1.8">
    <property type="organism ID" value="5239"/>
</dbReference>
<dbReference type="BRENDA" id="5.3.1.9">
    <property type="organism ID" value="5239"/>
</dbReference>
<dbReference type="SABIO-RK" id="Q8ZWV0"/>
<dbReference type="EvolutionaryTrace" id="Q8ZWV0"/>
<dbReference type="Proteomes" id="UP000002439">
    <property type="component" value="Chromosome"/>
</dbReference>
<dbReference type="GO" id="GO:0005737">
    <property type="term" value="C:cytoplasm"/>
    <property type="evidence" value="ECO:0007669"/>
    <property type="project" value="UniProtKB-SubCell"/>
</dbReference>
<dbReference type="GO" id="GO:0097367">
    <property type="term" value="F:carbohydrate derivative binding"/>
    <property type="evidence" value="ECO:0007669"/>
    <property type="project" value="InterPro"/>
</dbReference>
<dbReference type="GO" id="GO:0004347">
    <property type="term" value="F:glucose-6-phosphate isomerase activity"/>
    <property type="evidence" value="ECO:0007669"/>
    <property type="project" value="UniProtKB-EC"/>
</dbReference>
<dbReference type="GO" id="GO:0004476">
    <property type="term" value="F:mannose-6-phosphate isomerase activity"/>
    <property type="evidence" value="ECO:0007669"/>
    <property type="project" value="UniProtKB-EC"/>
</dbReference>
<dbReference type="GO" id="GO:1901135">
    <property type="term" value="P:carbohydrate derivative metabolic process"/>
    <property type="evidence" value="ECO:0007669"/>
    <property type="project" value="InterPro"/>
</dbReference>
<dbReference type="GO" id="GO:0005975">
    <property type="term" value="P:carbohydrate metabolic process"/>
    <property type="evidence" value="ECO:0007669"/>
    <property type="project" value="InterPro"/>
</dbReference>
<dbReference type="CDD" id="cd05017">
    <property type="entry name" value="SIS_PGI_PMI_1"/>
    <property type="match status" value="1"/>
</dbReference>
<dbReference type="CDD" id="cd05637">
    <property type="entry name" value="SIS_PGI_PMI_2"/>
    <property type="match status" value="1"/>
</dbReference>
<dbReference type="Gene3D" id="3.40.50.10490">
    <property type="entry name" value="Glucose-6-phosphate isomerase like protein, domain 1"/>
    <property type="match status" value="2"/>
</dbReference>
<dbReference type="InterPro" id="IPR019490">
    <property type="entry name" value="Glu6P/Mann6P_isomerase_C"/>
</dbReference>
<dbReference type="InterPro" id="IPR001347">
    <property type="entry name" value="SIS_dom"/>
</dbReference>
<dbReference type="InterPro" id="IPR046348">
    <property type="entry name" value="SIS_dom_sf"/>
</dbReference>
<dbReference type="InterPro" id="IPR035484">
    <property type="entry name" value="SIS_PGI/PMI_1"/>
</dbReference>
<dbReference type="NCBIfam" id="TIGR02128">
    <property type="entry name" value="G6PI_arch"/>
    <property type="match status" value="1"/>
</dbReference>
<dbReference type="Pfam" id="PF10432">
    <property type="entry name" value="bact-PGI_C"/>
    <property type="match status" value="1"/>
</dbReference>
<dbReference type="SUPFAM" id="SSF53697">
    <property type="entry name" value="SIS domain"/>
    <property type="match status" value="1"/>
</dbReference>
<dbReference type="PROSITE" id="PS51464">
    <property type="entry name" value="SIS"/>
    <property type="match status" value="1"/>
</dbReference>
<proteinExistence type="evidence at protein level"/>
<comment type="function">
    <text evidence="3">Dual specificity isomerase that catalyzes the isomerization of both glucose-6-phosphate and mannose-6-phosphate to fructose-6-phosphate with similar catalytic efficiency.</text>
</comment>
<comment type="catalytic activity">
    <reaction evidence="3">
        <text>alpha-D-glucose 6-phosphate = beta-D-fructose 6-phosphate</text>
        <dbReference type="Rhea" id="RHEA:11816"/>
        <dbReference type="ChEBI" id="CHEBI:57634"/>
        <dbReference type="ChEBI" id="CHEBI:58225"/>
        <dbReference type="EC" id="5.3.1.9"/>
    </reaction>
</comment>
<comment type="catalytic activity">
    <reaction evidence="3">
        <text>D-mannose 6-phosphate = D-fructose 6-phosphate</text>
        <dbReference type="Rhea" id="RHEA:12356"/>
        <dbReference type="ChEBI" id="CHEBI:58735"/>
        <dbReference type="ChEBI" id="CHEBI:61527"/>
        <dbReference type="EC" id="5.3.1.8"/>
    </reaction>
</comment>
<comment type="activity regulation">
    <text evidence="2 3">Inhibited by 5-phosphoarabinonate (PAB) and 6-phosphogluconate.</text>
</comment>
<comment type="biophysicochemical properties">
    <kinetics>
        <KM evidence="3">2.7 mM for glucose 6-phosphate (at 50 degrees Celsius)</KM>
        <KM evidence="3">0.3 mM for fructose 6-phosphate (at 50 degrees Celsius)</KM>
        <KM evidence="3">1.9 mM for glucose 6-phosphate (at 80 degrees Celsius)</KM>
        <KM evidence="3">0.06 mM for fructose 6-phosphate (at 80 degrees Celsius)</KM>
        <KM evidence="3">0.49 mM for mannose 6-phosphate (at 80 degrees Celsius)</KM>
        <Vmax evidence="3">50.0 mmol/min/mg enzyme with glucose 6-phosphate as substrate (at 50 degrees Celsius)</Vmax>
        <Vmax evidence="3">31.3 mmol/min/mg enzyme with fructose 6-phosphate as substrate (at 50 degrees Celsius)</Vmax>
        <Vmax evidence="3">150.0 mmol/min/mg enzyme with glucose 6-phosphate as substrate (at 80 degrees Celsius)</Vmax>
        <Vmax evidence="3">109.0 mmol/min/mg enzyme with fructose 6-phosphate as substrate (at 80 degrees Celsius)</Vmax>
        <Vmax evidence="3">117.0 mmol/min/mg enzyme with mannose 6-phosphate as substrate (at 80 degrees Celsius)</Vmax>
    </kinetics>
    <phDependence>
        <text evidence="3">Optimum pH is 7.4.</text>
    </phDependence>
    <temperatureDependence>
        <text evidence="3">Optimum temperature is 100 degrees Celsius.</text>
    </temperatureDependence>
</comment>
<comment type="subunit">
    <text evidence="2 3 4">Homodimer.</text>
</comment>
<comment type="subcellular location">
    <subcellularLocation>
        <location evidence="9">Cytoplasm</location>
    </subcellularLocation>
</comment>
<comment type="domain">
    <text evidence="2 4">The lack of any movement in response to the binding of ligand may be due to its inherent thermostability, which would tend to restrict any flexibility in the protein.</text>
</comment>
<comment type="similarity">
    <text evidence="7">Belongs to the PGI/PMI family.</text>
</comment>